<gene>
    <name evidence="1" type="primary">lysY</name>
    <name type="ordered locus">Cmaq_1301</name>
</gene>
<keyword id="KW-0028">Amino-acid biosynthesis</keyword>
<keyword id="KW-0055">Arginine biosynthesis</keyword>
<keyword id="KW-0963">Cytoplasm</keyword>
<keyword id="KW-0457">Lysine biosynthesis</keyword>
<keyword id="KW-0521">NADP</keyword>
<keyword id="KW-0560">Oxidoreductase</keyword>
<keyword id="KW-1185">Reference proteome</keyword>
<organism>
    <name type="scientific">Caldivirga maquilingensis (strain ATCC 700844 / DSM 13496 / JCM 10307 / IC-167)</name>
    <dbReference type="NCBI Taxonomy" id="397948"/>
    <lineage>
        <taxon>Archaea</taxon>
        <taxon>Thermoproteota</taxon>
        <taxon>Thermoprotei</taxon>
        <taxon>Thermoproteales</taxon>
        <taxon>Thermoproteaceae</taxon>
        <taxon>Caldivirga</taxon>
    </lineage>
</organism>
<proteinExistence type="inferred from homology"/>
<reference key="1">
    <citation type="submission" date="2007-10" db="EMBL/GenBank/DDBJ databases">
        <title>Complete sequence of Caldivirga maquilingensis IC-167.</title>
        <authorList>
            <consortium name="US DOE Joint Genome Institute"/>
            <person name="Copeland A."/>
            <person name="Lucas S."/>
            <person name="Lapidus A."/>
            <person name="Barry K."/>
            <person name="Glavina del Rio T."/>
            <person name="Dalin E."/>
            <person name="Tice H."/>
            <person name="Pitluck S."/>
            <person name="Saunders E."/>
            <person name="Brettin T."/>
            <person name="Bruce D."/>
            <person name="Detter J.C."/>
            <person name="Han C."/>
            <person name="Schmutz J."/>
            <person name="Larimer F."/>
            <person name="Land M."/>
            <person name="Hauser L."/>
            <person name="Kyrpides N."/>
            <person name="Ivanova N."/>
            <person name="Biddle J.F."/>
            <person name="Zhang Z."/>
            <person name="Fitz-Gibbon S.T."/>
            <person name="Lowe T.M."/>
            <person name="Saltikov C."/>
            <person name="House C.H."/>
            <person name="Richardson P."/>
        </authorList>
    </citation>
    <scope>NUCLEOTIDE SEQUENCE [LARGE SCALE GENOMIC DNA]</scope>
    <source>
        <strain>ATCC 700844 / DSM 13496 / JCM 10307 / IC-167</strain>
    </source>
</reference>
<accession>A8M8Q9</accession>
<comment type="function">
    <text evidence="1">Involved in both the arginine and lysine biosynthetic pathways.</text>
</comment>
<comment type="catalytic activity">
    <reaction evidence="1">
        <text>[amino-group carrier protein]-C-terminal-N-(1-carboxy-5-oxopentan-1-yl)-L-glutamine + phosphate + NADP(+) = [amino-group carrier protein]-C-terminal-N-(1-carboxy-5-phosphooxy-5-oxopentan-1-yl)-L-glutamine + NADPH + H(+)</text>
        <dbReference type="Rhea" id="RHEA:41948"/>
        <dbReference type="Rhea" id="RHEA-COMP:9712"/>
        <dbReference type="Rhea" id="RHEA-COMP:9714"/>
        <dbReference type="ChEBI" id="CHEBI:15378"/>
        <dbReference type="ChEBI" id="CHEBI:43474"/>
        <dbReference type="ChEBI" id="CHEBI:57783"/>
        <dbReference type="ChEBI" id="CHEBI:58349"/>
        <dbReference type="ChEBI" id="CHEBI:78499"/>
        <dbReference type="ChEBI" id="CHEBI:78501"/>
        <dbReference type="EC" id="1.2.1.103"/>
    </reaction>
</comment>
<comment type="catalytic activity">
    <reaction evidence="1">
        <text>[amino-group carrier protein]-C-terminal-gamma-(L-glutamyl-5-semialdehyde)-L-glutamate + phosphate + NADP(+) = [amino-group carrier protein]-C-terminal-gamma-(5-phospho-L-glutamyl)-L-glutamate + NADPH + H(+)</text>
        <dbReference type="Rhea" id="RHEA:52668"/>
        <dbReference type="Rhea" id="RHEA-COMP:13313"/>
        <dbReference type="Rhea" id="RHEA-COMP:13327"/>
        <dbReference type="ChEBI" id="CHEBI:15378"/>
        <dbReference type="ChEBI" id="CHEBI:43474"/>
        <dbReference type="ChEBI" id="CHEBI:57783"/>
        <dbReference type="ChEBI" id="CHEBI:58349"/>
        <dbReference type="ChEBI" id="CHEBI:136717"/>
        <dbReference type="ChEBI" id="CHEBI:136761"/>
        <dbReference type="EC" id="1.2.1.106"/>
    </reaction>
</comment>
<comment type="pathway">
    <text evidence="1">Amino-acid biosynthesis; L-lysine biosynthesis via AAA pathway; L-lysine from L-alpha-aminoadipate (Thermus route): step 3/5.</text>
</comment>
<comment type="pathway">
    <text evidence="1">Amino-acid biosynthesis; L-arginine biosynthesis.</text>
</comment>
<comment type="subcellular location">
    <subcellularLocation>
        <location evidence="1">Cytoplasm</location>
    </subcellularLocation>
</comment>
<comment type="similarity">
    <text evidence="1">Belongs to the NAGSA dehydrogenase family. Type 1 subfamily. LysY sub-subfamily.</text>
</comment>
<sequence length="354" mass="39115">MRRACIIGASGVIGGELLRLLLGHNNVEVVCATSRRFAGEFIYRVHPNLRGFINLKFTQPSIDAVLKSESDVVFLALPHGESVKWVPKLVESGLLAIDLSADFRLKNPDDYVKWYHWPQPHPYPDLLKAAAYGLPELHRDEIKATKVIAVPGCMATASIVSLAPLVKGHLINNDFIVVDAKIASSGAGAEGTVLDYHWHRTHVVRPYQPVGHRHTAEIEQELSLLAGSQVNVAFTPHAVDMVRGIFVTGHARLSGSISEPDLWRAYRGMYGNERFIRIVKDKAGLAHYPSVKYVVGTNMVDVGFELDQRLNRVVVFSAIDNLIRGAAGQAIQSFNINQGFPEDEGLRFITPYPV</sequence>
<feature type="chain" id="PRO_1000076727" description="Putative [LysW]-L-2-aminoadipate/[LysW]-L-glutamate phosphate reductase">
    <location>
        <begin position="1"/>
        <end position="354"/>
    </location>
</feature>
<feature type="active site" evidence="1">
    <location>
        <position position="153"/>
    </location>
</feature>
<feature type="binding site" evidence="1">
    <location>
        <begin position="10"/>
        <end position="13"/>
    </location>
    <ligand>
        <name>NADP(+)</name>
        <dbReference type="ChEBI" id="CHEBI:58349"/>
    </ligand>
</feature>
<feature type="binding site" evidence="1">
    <location>
        <begin position="34"/>
        <end position="36"/>
    </location>
    <ligand>
        <name>NADP(+)</name>
        <dbReference type="ChEBI" id="CHEBI:58349"/>
    </ligand>
</feature>
<feature type="binding site" evidence="1">
    <location>
        <position position="321"/>
    </location>
    <ligand>
        <name>NADP(+)</name>
        <dbReference type="ChEBI" id="CHEBI:58349"/>
    </ligand>
</feature>
<protein>
    <recommendedName>
        <fullName evidence="1">Putative [LysW]-L-2-aminoadipate/[LysW]-L-glutamate phosphate reductase</fullName>
        <ecNumber evidence="1">1.2.1.103</ecNumber>
        <ecNumber evidence="1">1.2.1.106</ecNumber>
    </recommendedName>
</protein>
<name>LYSY_CALMQ</name>
<dbReference type="EC" id="1.2.1.103" evidence="1"/>
<dbReference type="EC" id="1.2.1.106" evidence="1"/>
<dbReference type="EMBL" id="CP000852">
    <property type="protein sequence ID" value="ABW02128.1"/>
    <property type="molecule type" value="Genomic_DNA"/>
</dbReference>
<dbReference type="RefSeq" id="WP_012186347.1">
    <property type="nucleotide sequence ID" value="NC_009954.1"/>
</dbReference>
<dbReference type="SMR" id="A8M8Q9"/>
<dbReference type="STRING" id="397948.Cmaq_1301"/>
<dbReference type="GeneID" id="5708908"/>
<dbReference type="KEGG" id="cma:Cmaq_1301"/>
<dbReference type="eggNOG" id="arCOG00495">
    <property type="taxonomic scope" value="Archaea"/>
</dbReference>
<dbReference type="HOGENOM" id="CLU_006384_0_1_2"/>
<dbReference type="OrthoDB" id="372053at2157"/>
<dbReference type="UniPathway" id="UPA00033">
    <property type="reaction ID" value="UER00037"/>
</dbReference>
<dbReference type="UniPathway" id="UPA00068"/>
<dbReference type="Proteomes" id="UP000001137">
    <property type="component" value="Chromosome"/>
</dbReference>
<dbReference type="GO" id="GO:0005737">
    <property type="term" value="C:cytoplasm"/>
    <property type="evidence" value="ECO:0007669"/>
    <property type="project" value="UniProtKB-SubCell"/>
</dbReference>
<dbReference type="GO" id="GO:0043870">
    <property type="term" value="F:N-acetyl-gamma-aminoadipyl-phosphate reductase activity"/>
    <property type="evidence" value="ECO:0007669"/>
    <property type="project" value="RHEA"/>
</dbReference>
<dbReference type="GO" id="GO:0003942">
    <property type="term" value="F:N-acetyl-gamma-glutamyl-phosphate reductase activity"/>
    <property type="evidence" value="ECO:0007669"/>
    <property type="project" value="InterPro"/>
</dbReference>
<dbReference type="GO" id="GO:0051287">
    <property type="term" value="F:NAD binding"/>
    <property type="evidence" value="ECO:0007669"/>
    <property type="project" value="InterPro"/>
</dbReference>
<dbReference type="GO" id="GO:0070401">
    <property type="term" value="F:NADP+ binding"/>
    <property type="evidence" value="ECO:0007669"/>
    <property type="project" value="InterPro"/>
</dbReference>
<dbReference type="GO" id="GO:0042450">
    <property type="term" value="P:arginine biosynthetic process via ornithine"/>
    <property type="evidence" value="ECO:0007669"/>
    <property type="project" value="UniProtKB-UniRule"/>
</dbReference>
<dbReference type="GO" id="GO:0006526">
    <property type="term" value="P:L-arginine biosynthetic process"/>
    <property type="evidence" value="ECO:0007669"/>
    <property type="project" value="UniProtKB-UniPathway"/>
</dbReference>
<dbReference type="GO" id="GO:0019878">
    <property type="term" value="P:lysine biosynthetic process via aminoadipic acid"/>
    <property type="evidence" value="ECO:0007669"/>
    <property type="project" value="UniProtKB-UniRule"/>
</dbReference>
<dbReference type="CDD" id="cd23939">
    <property type="entry name" value="AGPR_1_C_LysY"/>
    <property type="match status" value="1"/>
</dbReference>
<dbReference type="CDD" id="cd17895">
    <property type="entry name" value="AGPR_1_N"/>
    <property type="match status" value="1"/>
</dbReference>
<dbReference type="Gene3D" id="3.30.360.10">
    <property type="entry name" value="Dihydrodipicolinate Reductase, domain 2"/>
    <property type="match status" value="1"/>
</dbReference>
<dbReference type="Gene3D" id="3.40.50.720">
    <property type="entry name" value="NAD(P)-binding Rossmann-like Domain"/>
    <property type="match status" value="1"/>
</dbReference>
<dbReference type="HAMAP" id="MF_00150">
    <property type="entry name" value="ArgC_type1"/>
    <property type="match status" value="1"/>
</dbReference>
<dbReference type="HAMAP" id="MF_02083">
    <property type="entry name" value="LysY"/>
    <property type="match status" value="1"/>
</dbReference>
<dbReference type="InterPro" id="IPR000706">
    <property type="entry name" value="AGPR_type-1"/>
</dbReference>
<dbReference type="InterPro" id="IPR037535">
    <property type="entry name" value="LysY"/>
</dbReference>
<dbReference type="InterPro" id="IPR036291">
    <property type="entry name" value="NAD(P)-bd_dom_sf"/>
</dbReference>
<dbReference type="InterPro" id="IPR050085">
    <property type="entry name" value="NAGSA_dehydrogenase"/>
</dbReference>
<dbReference type="InterPro" id="IPR000534">
    <property type="entry name" value="Semialdehyde_DH_NAD-bd"/>
</dbReference>
<dbReference type="NCBIfam" id="TIGR01850">
    <property type="entry name" value="argC"/>
    <property type="match status" value="1"/>
</dbReference>
<dbReference type="PANTHER" id="PTHR32338:SF11">
    <property type="entry name" value="[LYSW]-L-2-AMINOADIPATE_[LYSW]-L-GLUTAMATE PHOSPHATE REDUCTASE-RELATED"/>
    <property type="match status" value="1"/>
</dbReference>
<dbReference type="PANTHER" id="PTHR32338">
    <property type="entry name" value="N-ACETYL-GAMMA-GLUTAMYL-PHOSPHATE REDUCTASE, CHLOROPLASTIC-RELATED-RELATED"/>
    <property type="match status" value="1"/>
</dbReference>
<dbReference type="Pfam" id="PF01118">
    <property type="entry name" value="Semialdhyde_dh"/>
    <property type="match status" value="1"/>
</dbReference>
<dbReference type="Pfam" id="PF22698">
    <property type="entry name" value="Semialdhyde_dhC_1"/>
    <property type="match status" value="1"/>
</dbReference>
<dbReference type="SMART" id="SM00859">
    <property type="entry name" value="Semialdhyde_dh"/>
    <property type="match status" value="1"/>
</dbReference>
<dbReference type="SUPFAM" id="SSF55347">
    <property type="entry name" value="Glyceraldehyde-3-phosphate dehydrogenase-like, C-terminal domain"/>
    <property type="match status" value="1"/>
</dbReference>
<dbReference type="SUPFAM" id="SSF51735">
    <property type="entry name" value="NAD(P)-binding Rossmann-fold domains"/>
    <property type="match status" value="1"/>
</dbReference>
<evidence type="ECO:0000255" key="1">
    <source>
        <dbReference type="HAMAP-Rule" id="MF_02083"/>
    </source>
</evidence>